<reference key="1">
    <citation type="journal article" date="2001" name="Nature">
        <title>Complete genome sequence of Salmonella enterica serovar Typhimurium LT2.</title>
        <authorList>
            <person name="McClelland M."/>
            <person name="Sanderson K.E."/>
            <person name="Spieth J."/>
            <person name="Clifton S.W."/>
            <person name="Latreille P."/>
            <person name="Courtney L."/>
            <person name="Porwollik S."/>
            <person name="Ali J."/>
            <person name="Dante M."/>
            <person name="Du F."/>
            <person name="Hou S."/>
            <person name="Layman D."/>
            <person name="Leonard S."/>
            <person name="Nguyen C."/>
            <person name="Scott K."/>
            <person name="Holmes A."/>
            <person name="Grewal N."/>
            <person name="Mulvaney E."/>
            <person name="Ryan E."/>
            <person name="Sun H."/>
            <person name="Florea L."/>
            <person name="Miller W."/>
            <person name="Stoneking T."/>
            <person name="Nhan M."/>
            <person name="Waterston R."/>
            <person name="Wilson R.K."/>
        </authorList>
    </citation>
    <scope>NUCLEOTIDE SEQUENCE [LARGE SCALE GENOMIC DNA]</scope>
    <source>
        <strain>LT2 / SGSC1412 / ATCC 700720</strain>
    </source>
</reference>
<protein>
    <recommendedName>
        <fullName evidence="1">Adenine phosphoribosyltransferase</fullName>
        <shortName evidence="1">APRT</shortName>
        <ecNumber evidence="1">2.4.2.7</ecNumber>
    </recommendedName>
</protein>
<accession>Q8ZRA2</accession>
<gene>
    <name evidence="1" type="primary">apt</name>
    <name type="ordered locus">STM0483</name>
</gene>
<evidence type="ECO:0000255" key="1">
    <source>
        <dbReference type="HAMAP-Rule" id="MF_00004"/>
    </source>
</evidence>
<organism>
    <name type="scientific">Salmonella typhimurium (strain LT2 / SGSC1412 / ATCC 700720)</name>
    <dbReference type="NCBI Taxonomy" id="99287"/>
    <lineage>
        <taxon>Bacteria</taxon>
        <taxon>Pseudomonadati</taxon>
        <taxon>Pseudomonadota</taxon>
        <taxon>Gammaproteobacteria</taxon>
        <taxon>Enterobacterales</taxon>
        <taxon>Enterobacteriaceae</taxon>
        <taxon>Salmonella</taxon>
    </lineage>
</organism>
<dbReference type="EC" id="2.4.2.7" evidence="1"/>
<dbReference type="EMBL" id="AE006468">
    <property type="protein sequence ID" value="AAL19437.1"/>
    <property type="molecule type" value="Genomic_DNA"/>
</dbReference>
<dbReference type="RefSeq" id="NP_459478.1">
    <property type="nucleotide sequence ID" value="NC_003197.2"/>
</dbReference>
<dbReference type="RefSeq" id="WP_000127350.1">
    <property type="nucleotide sequence ID" value="NC_003197.2"/>
</dbReference>
<dbReference type="SMR" id="Q8ZRA2"/>
<dbReference type="STRING" id="99287.STM0483"/>
<dbReference type="PaxDb" id="99287-STM0483"/>
<dbReference type="GeneID" id="1252003"/>
<dbReference type="KEGG" id="stm:STM0483"/>
<dbReference type="PATRIC" id="fig|99287.12.peg.516"/>
<dbReference type="HOGENOM" id="CLU_063339_3_0_6"/>
<dbReference type="OMA" id="QAYDLEY"/>
<dbReference type="PhylomeDB" id="Q8ZRA2"/>
<dbReference type="BioCyc" id="SENT99287:STM0483-MONOMER"/>
<dbReference type="UniPathway" id="UPA00588">
    <property type="reaction ID" value="UER00646"/>
</dbReference>
<dbReference type="Proteomes" id="UP000001014">
    <property type="component" value="Chromosome"/>
</dbReference>
<dbReference type="GO" id="GO:0005829">
    <property type="term" value="C:cytosol"/>
    <property type="evidence" value="ECO:0000318"/>
    <property type="project" value="GO_Central"/>
</dbReference>
<dbReference type="GO" id="GO:0003999">
    <property type="term" value="F:adenine phosphoribosyltransferase activity"/>
    <property type="evidence" value="ECO:0000318"/>
    <property type="project" value="GO_Central"/>
</dbReference>
<dbReference type="GO" id="GO:0006168">
    <property type="term" value="P:adenine salvage"/>
    <property type="evidence" value="ECO:0007669"/>
    <property type="project" value="InterPro"/>
</dbReference>
<dbReference type="GO" id="GO:0044209">
    <property type="term" value="P:AMP salvage"/>
    <property type="evidence" value="ECO:0007669"/>
    <property type="project" value="UniProtKB-UniRule"/>
</dbReference>
<dbReference type="GO" id="GO:0006166">
    <property type="term" value="P:purine ribonucleoside salvage"/>
    <property type="evidence" value="ECO:0007669"/>
    <property type="project" value="UniProtKB-KW"/>
</dbReference>
<dbReference type="CDD" id="cd06223">
    <property type="entry name" value="PRTases_typeI"/>
    <property type="match status" value="1"/>
</dbReference>
<dbReference type="FunFam" id="3.40.50.2020:FF:000004">
    <property type="entry name" value="Adenine phosphoribosyltransferase"/>
    <property type="match status" value="1"/>
</dbReference>
<dbReference type="Gene3D" id="3.40.50.2020">
    <property type="match status" value="1"/>
</dbReference>
<dbReference type="HAMAP" id="MF_00004">
    <property type="entry name" value="Aden_phosphoribosyltr"/>
    <property type="match status" value="1"/>
</dbReference>
<dbReference type="InterPro" id="IPR005764">
    <property type="entry name" value="Ade_phspho_trans"/>
</dbReference>
<dbReference type="InterPro" id="IPR050120">
    <property type="entry name" value="Adenine_PRTase"/>
</dbReference>
<dbReference type="InterPro" id="IPR000836">
    <property type="entry name" value="PRibTrfase_dom"/>
</dbReference>
<dbReference type="InterPro" id="IPR029057">
    <property type="entry name" value="PRTase-like"/>
</dbReference>
<dbReference type="NCBIfam" id="TIGR01090">
    <property type="entry name" value="apt"/>
    <property type="match status" value="1"/>
</dbReference>
<dbReference type="NCBIfam" id="NF002632">
    <property type="entry name" value="PRK02304.1-1"/>
    <property type="match status" value="1"/>
</dbReference>
<dbReference type="NCBIfam" id="NF002634">
    <property type="entry name" value="PRK02304.1-3"/>
    <property type="match status" value="1"/>
</dbReference>
<dbReference type="NCBIfam" id="NF002636">
    <property type="entry name" value="PRK02304.1-5"/>
    <property type="match status" value="1"/>
</dbReference>
<dbReference type="PANTHER" id="PTHR11776">
    <property type="entry name" value="ADENINE PHOSPHORIBOSYLTRANSFERASE"/>
    <property type="match status" value="1"/>
</dbReference>
<dbReference type="PANTHER" id="PTHR11776:SF7">
    <property type="entry name" value="PHOSPHORIBOSYLTRANSFERASE DOMAIN-CONTAINING PROTEIN"/>
    <property type="match status" value="1"/>
</dbReference>
<dbReference type="Pfam" id="PF00156">
    <property type="entry name" value="Pribosyltran"/>
    <property type="match status" value="1"/>
</dbReference>
<dbReference type="SUPFAM" id="SSF53271">
    <property type="entry name" value="PRTase-like"/>
    <property type="match status" value="1"/>
</dbReference>
<dbReference type="PROSITE" id="PS00103">
    <property type="entry name" value="PUR_PYR_PR_TRANSFER"/>
    <property type="match status" value="1"/>
</dbReference>
<keyword id="KW-0963">Cytoplasm</keyword>
<keyword id="KW-0328">Glycosyltransferase</keyword>
<keyword id="KW-0660">Purine salvage</keyword>
<keyword id="KW-1185">Reference proteome</keyword>
<keyword id="KW-0808">Transferase</keyword>
<feature type="chain" id="PRO_0000149445" description="Adenine phosphoribosyltransferase">
    <location>
        <begin position="1"/>
        <end position="183"/>
    </location>
</feature>
<proteinExistence type="inferred from homology"/>
<sequence length="183" mass="19985">MTATAQQLEFLKNSIKSIQDYPKPGILFRDVTSLLEDPKAYALSIELLVERYKNAGITKVVGTEARGFLFGAPVALGLGVGFVPVRKPRKLPRETIAETYELEYGTDQLEIHVDAIKPGDNVLVVDDLLATGGTIEATVKLIRRLGGKVTDAAFIINLFDLGGEQRLEKQGITCYSLVPFPGH</sequence>
<comment type="function">
    <text evidence="1">Catalyzes a salvage reaction resulting in the formation of AMP, that is energically less costly than de novo synthesis.</text>
</comment>
<comment type="catalytic activity">
    <reaction evidence="1">
        <text>AMP + diphosphate = 5-phospho-alpha-D-ribose 1-diphosphate + adenine</text>
        <dbReference type="Rhea" id="RHEA:16609"/>
        <dbReference type="ChEBI" id="CHEBI:16708"/>
        <dbReference type="ChEBI" id="CHEBI:33019"/>
        <dbReference type="ChEBI" id="CHEBI:58017"/>
        <dbReference type="ChEBI" id="CHEBI:456215"/>
        <dbReference type="EC" id="2.4.2.7"/>
    </reaction>
</comment>
<comment type="pathway">
    <text evidence="1">Purine metabolism; AMP biosynthesis via salvage pathway; AMP from adenine: step 1/1.</text>
</comment>
<comment type="subunit">
    <text evidence="1">Homodimer.</text>
</comment>
<comment type="subcellular location">
    <subcellularLocation>
        <location evidence="1">Cytoplasm</location>
    </subcellularLocation>
</comment>
<comment type="similarity">
    <text evidence="1">Belongs to the purine/pyrimidine phosphoribosyltransferase family.</text>
</comment>
<name>APT_SALTY</name>